<sequence>MTSMYNFKRITCVPNAQELKDVVLSKTQRKTPTVVHRQYSIGRIRAFYARKIKFLQQTLHDKLTQIITEFPKMEEIHPFYSDLMNILYDRDHYKIALGQMNTARHLIDGIAREYVRLMKYADSLYRCKMLKRAALGRMVKLLKRQKSSFEYLEQVRQHLSRLPSIDPATRTLILCGFPNVGKSSFINNVTRADVEVQPYAFTTKALYVGHLDYRFLRWQVIDTPGILDQPLEDRNTIEMQAVTALAHLKASVLFMMDVSEQCDRSIEEQLHLFESIRPLFANKPVLIGLNKVDIRHRSDLPPEKAALLDQLEKEGIPIIETSTLTQEGVMGLRDRACDELLAQRVEAKIQAKKITNVEDCVLNRVFVAYPAPRDEKVRAPFVPPGLAAKRAQKKLQEAQELMETDGDEFAAKIPQKPGKIGKEKIAKGGSQSTDLGDLRDENTRRLEREIELEMQDDYILDLKKHYMLKNPDEKYDIVPEIWEGHNLADFVDPEIQSKLENLLREEELLEQAGEYESDLDSDDEETKEKLKLALQIREKEKLLTLDHAVNKRIAGRIGSRIHGSRKRDRSMSRLENELGELGVDVDTKKMKNLQGQCAKPQLGKKMKVGRSRSLSAVRPAPRDELAFPDEEKRAHVDKLRTKAMRGLRREAKKGEADRHVYDLKPKHLFCGKRGNGKTDWR</sequence>
<evidence type="ECO:0000250" key="1">
    <source>
        <dbReference type="UniProtKB" id="Q02892"/>
    </source>
</evidence>
<evidence type="ECO:0000255" key="2">
    <source>
        <dbReference type="PROSITE-ProRule" id="PRU01047"/>
    </source>
</evidence>
<evidence type="ECO:0000269" key="3">
    <source>
    </source>
</evidence>
<evidence type="ECO:0000303" key="4">
    <source>
    </source>
</evidence>
<evidence type="ECO:0000305" key="5"/>
<evidence type="ECO:0000312" key="6">
    <source>
        <dbReference type="WormBase" id="T07A9.9"/>
    </source>
</evidence>
<comment type="function">
    <text evidence="1 3">Involved in the biogenesis of the 60S ribosomal subunit (By similarity). Has a role in regulating longevity, growth and brood size (PubMed:24552710). May regulate fat storage via the insulin/IGF pathway (PubMed:24552710).</text>
</comment>
<comment type="subcellular location">
    <subcellularLocation>
        <location evidence="3">Nucleus</location>
        <location evidence="3">Nucleolus</location>
    </subcellularLocation>
</comment>
<comment type="tissue specificity">
    <text evidence="3">Ubiquitously expressed.</text>
</comment>
<comment type="developmental stage">
    <text evidence="3">Expressed from early embryonic stages through to adulthood.</text>
</comment>
<comment type="disruption phenotype">
    <text evidence="3">RNAi-mediated knockdown results in an extended lifespan, reduced brood size, slower growth rate and increased fat storage.</text>
</comment>
<comment type="similarity">
    <text evidence="2">Belongs to the TRAFAC class OBG-HflX-like GTPase superfamily. OBG GTPase family. NOG subfamily.</text>
</comment>
<protein>
    <recommendedName>
        <fullName evidence="4">Nucleolar GTP-binding protein 1</fullName>
    </recommendedName>
</protein>
<proteinExistence type="evidence at protein level"/>
<dbReference type="EMBL" id="BX284604">
    <property type="protein sequence ID" value="CCD73980.1"/>
    <property type="molecule type" value="Genomic_DNA"/>
</dbReference>
<dbReference type="PIR" id="T32580">
    <property type="entry name" value="T32580"/>
</dbReference>
<dbReference type="RefSeq" id="NP_741288.1">
    <property type="nucleotide sequence ID" value="NM_171242.6"/>
</dbReference>
<dbReference type="SMR" id="O44411"/>
<dbReference type="BioGRID" id="42024">
    <property type="interactions" value="5"/>
</dbReference>
<dbReference type="FunCoup" id="O44411">
    <property type="interactions" value="3297"/>
</dbReference>
<dbReference type="IntAct" id="O44411">
    <property type="interactions" value="2"/>
</dbReference>
<dbReference type="STRING" id="6239.T07A9.9.2"/>
<dbReference type="iPTMnet" id="O44411"/>
<dbReference type="PaxDb" id="6239-T07A9.9a.3"/>
<dbReference type="PeptideAtlas" id="O44411"/>
<dbReference type="EnsemblMetazoa" id="T07A9.9.1">
    <property type="protein sequence ID" value="T07A9.9.1"/>
    <property type="gene ID" value="WBGene00020297"/>
</dbReference>
<dbReference type="EnsemblMetazoa" id="T07A9.9.2">
    <property type="protein sequence ID" value="T07A9.9.2"/>
    <property type="gene ID" value="WBGene00020297"/>
</dbReference>
<dbReference type="EnsemblMetazoa" id="T07A9.9.3">
    <property type="protein sequence ID" value="T07A9.9.3"/>
    <property type="gene ID" value="WBGene00020297"/>
</dbReference>
<dbReference type="GeneID" id="176863"/>
<dbReference type="KEGG" id="cel:CELE_T07A9.9"/>
<dbReference type="UCSC" id="T07A9.9a.3">
    <property type="organism name" value="c. elegans"/>
</dbReference>
<dbReference type="AGR" id="WB:WBGene00020297"/>
<dbReference type="CTD" id="176863"/>
<dbReference type="WormBase" id="T07A9.9">
    <property type="protein sequence ID" value="CE17218"/>
    <property type="gene ID" value="WBGene00020297"/>
    <property type="gene designation" value="nog-1"/>
</dbReference>
<dbReference type="eggNOG" id="KOG1490">
    <property type="taxonomic scope" value="Eukaryota"/>
</dbReference>
<dbReference type="GeneTree" id="ENSGT00390000018475"/>
<dbReference type="InParanoid" id="O44411"/>
<dbReference type="OMA" id="EWKNDVM"/>
<dbReference type="OrthoDB" id="415015at2759"/>
<dbReference type="PhylomeDB" id="O44411"/>
<dbReference type="SignaLink" id="O44411"/>
<dbReference type="PRO" id="PR:O44411"/>
<dbReference type="Proteomes" id="UP000001940">
    <property type="component" value="Chromosome IV"/>
</dbReference>
<dbReference type="Bgee" id="WBGene00020297">
    <property type="expression patterns" value="Expressed in larva and 4 other cell types or tissues"/>
</dbReference>
<dbReference type="GO" id="GO:0005730">
    <property type="term" value="C:nucleolus"/>
    <property type="evidence" value="ECO:0000314"/>
    <property type="project" value="WormBase"/>
</dbReference>
<dbReference type="GO" id="GO:0005634">
    <property type="term" value="C:nucleus"/>
    <property type="evidence" value="ECO:0000314"/>
    <property type="project" value="WormBase"/>
</dbReference>
<dbReference type="GO" id="GO:0005525">
    <property type="term" value="F:GTP binding"/>
    <property type="evidence" value="ECO:0007669"/>
    <property type="project" value="UniProtKB-KW"/>
</dbReference>
<dbReference type="GO" id="GO:0003924">
    <property type="term" value="F:GTPase activity"/>
    <property type="evidence" value="ECO:0000318"/>
    <property type="project" value="GO_Central"/>
</dbReference>
<dbReference type="GO" id="GO:0003723">
    <property type="term" value="F:RNA binding"/>
    <property type="evidence" value="ECO:0000318"/>
    <property type="project" value="GO_Central"/>
</dbReference>
<dbReference type="GO" id="GO:0008340">
    <property type="term" value="P:determination of adult lifespan"/>
    <property type="evidence" value="ECO:0000315"/>
    <property type="project" value="WormBase"/>
</dbReference>
<dbReference type="GO" id="GO:0010888">
    <property type="term" value="P:negative regulation of lipid storage"/>
    <property type="evidence" value="ECO:0000315"/>
    <property type="project" value="WormBase"/>
</dbReference>
<dbReference type="GO" id="GO:2000241">
    <property type="term" value="P:regulation of reproductive process"/>
    <property type="evidence" value="ECO:0000315"/>
    <property type="project" value="WormBase"/>
</dbReference>
<dbReference type="GO" id="GO:0042273">
    <property type="term" value="P:ribosomal large subunit biogenesis"/>
    <property type="evidence" value="ECO:0000318"/>
    <property type="project" value="GO_Central"/>
</dbReference>
<dbReference type="CDD" id="cd01897">
    <property type="entry name" value="NOG"/>
    <property type="match status" value="1"/>
</dbReference>
<dbReference type="FunFam" id="1.20.120.1190:FF:000001">
    <property type="entry name" value="Nucleolar GTP-binding protein 1"/>
    <property type="match status" value="1"/>
</dbReference>
<dbReference type="FunFam" id="3.40.50.300:FF:000496">
    <property type="entry name" value="Nucleolar GTP-binding protein 1"/>
    <property type="match status" value="1"/>
</dbReference>
<dbReference type="Gene3D" id="1.20.120.1190">
    <property type="match status" value="1"/>
</dbReference>
<dbReference type="Gene3D" id="3.40.50.300">
    <property type="entry name" value="P-loop containing nucleotide triphosphate hydrolases"/>
    <property type="match status" value="1"/>
</dbReference>
<dbReference type="InterPro" id="IPR031167">
    <property type="entry name" value="G_OBG"/>
</dbReference>
<dbReference type="InterPro" id="IPR006073">
    <property type="entry name" value="GTP-bd"/>
</dbReference>
<dbReference type="InterPro" id="IPR024926">
    <property type="entry name" value="NOG1"/>
</dbReference>
<dbReference type="InterPro" id="IPR041623">
    <property type="entry name" value="NOG1_N"/>
</dbReference>
<dbReference type="InterPro" id="IPR010674">
    <property type="entry name" value="NOG1_Rossman_fold_dom"/>
</dbReference>
<dbReference type="InterPro" id="IPR012973">
    <property type="entry name" value="NOG_C"/>
</dbReference>
<dbReference type="InterPro" id="IPR027417">
    <property type="entry name" value="P-loop_NTPase"/>
</dbReference>
<dbReference type="InterPro" id="IPR005225">
    <property type="entry name" value="Small_GTP-bd"/>
</dbReference>
<dbReference type="NCBIfam" id="TIGR00231">
    <property type="entry name" value="small_GTP"/>
    <property type="match status" value="1"/>
</dbReference>
<dbReference type="PANTHER" id="PTHR45759">
    <property type="entry name" value="NUCLEOLAR GTP-BINDING PROTEIN 1"/>
    <property type="match status" value="1"/>
</dbReference>
<dbReference type="Pfam" id="PF06858">
    <property type="entry name" value="NOG1"/>
    <property type="match status" value="1"/>
</dbReference>
<dbReference type="Pfam" id="PF17835">
    <property type="entry name" value="NOG1_N"/>
    <property type="match status" value="1"/>
</dbReference>
<dbReference type="Pfam" id="PF08155">
    <property type="entry name" value="NOGCT"/>
    <property type="match status" value="1"/>
</dbReference>
<dbReference type="PIRSF" id="PIRSF038919">
    <property type="entry name" value="NOG1"/>
    <property type="match status" value="1"/>
</dbReference>
<dbReference type="PRINTS" id="PR00326">
    <property type="entry name" value="GTP1OBG"/>
</dbReference>
<dbReference type="SUPFAM" id="SSF52540">
    <property type="entry name" value="P-loop containing nucleoside triphosphate hydrolases"/>
    <property type="match status" value="1"/>
</dbReference>
<dbReference type="PROSITE" id="PS51710">
    <property type="entry name" value="G_OBG"/>
    <property type="match status" value="1"/>
</dbReference>
<reference key="1">
    <citation type="journal article" date="1998" name="Science">
        <title>Genome sequence of the nematode C. elegans: a platform for investigating biology.</title>
        <authorList>
            <consortium name="The C. elegans sequencing consortium"/>
        </authorList>
    </citation>
    <scope>NUCLEOTIDE SEQUENCE [LARGE SCALE GENOMIC DNA]</scope>
    <source>
        <strain>Bristol N2</strain>
    </source>
</reference>
<reference key="2">
    <citation type="journal article" date="2014" name="Mol. Cells">
        <title>Nucleolar GTPase NOG-1 regulates development, fat storage, and longevity through insulin/IGF signaling in C. elegans.</title>
        <authorList>
            <person name="Kim Y.I."/>
            <person name="Bandyopadhyay J."/>
            <person name="Cho I."/>
            <person name="Lee J."/>
            <person name="Park D.H."/>
            <person name="Cho J.H."/>
        </authorList>
    </citation>
    <scope>FUNCTION</scope>
    <scope>SUBCELLULAR LOCATION</scope>
    <scope>TISSUE SPECIFICITY</scope>
    <scope>DEVELOPMENTAL STAGE</scope>
    <scope>DISRUPTION PHENOTYPE</scope>
    <scope>MUTAGENESIS OF GLY-225</scope>
</reference>
<feature type="chain" id="PRO_0000195026" description="Nucleolar GTP-binding protein 1" evidence="5">
    <location>
        <begin position="1"/>
        <end position="681"/>
    </location>
</feature>
<feature type="domain" description="OBG-type G" evidence="2">
    <location>
        <begin position="170"/>
        <end position="341"/>
    </location>
</feature>
<feature type="binding site" evidence="2">
    <location>
        <begin position="176"/>
        <end position="183"/>
    </location>
    <ligand>
        <name>GTP</name>
        <dbReference type="ChEBI" id="CHEBI:37565"/>
    </ligand>
</feature>
<feature type="binding site" evidence="2">
    <location>
        <begin position="222"/>
        <end position="226"/>
    </location>
    <ligand>
        <name>GTP</name>
        <dbReference type="ChEBI" id="CHEBI:37565"/>
    </ligand>
</feature>
<feature type="binding site" evidence="2">
    <location>
        <begin position="290"/>
        <end position="293"/>
    </location>
    <ligand>
        <name>GTP</name>
        <dbReference type="ChEBI" id="CHEBI:37565"/>
    </ligand>
</feature>
<feature type="mutagenesis site" description="Results in aggregate formation within nucleoli." evidence="3">
    <original>G</original>
    <variation>A</variation>
    <location>
        <position position="225"/>
    </location>
</feature>
<name>NOG1_CAEEL</name>
<accession>O44411</accession>
<accession>Q8MXI6</accession>
<organism>
    <name type="scientific">Caenorhabditis elegans</name>
    <dbReference type="NCBI Taxonomy" id="6239"/>
    <lineage>
        <taxon>Eukaryota</taxon>
        <taxon>Metazoa</taxon>
        <taxon>Ecdysozoa</taxon>
        <taxon>Nematoda</taxon>
        <taxon>Chromadorea</taxon>
        <taxon>Rhabditida</taxon>
        <taxon>Rhabditina</taxon>
        <taxon>Rhabditomorpha</taxon>
        <taxon>Rhabditoidea</taxon>
        <taxon>Rhabditidae</taxon>
        <taxon>Peloderinae</taxon>
        <taxon>Caenorhabditis</taxon>
    </lineage>
</organism>
<gene>
    <name evidence="4 6" type="primary">nog-1</name>
    <name evidence="6" type="ORF">T07A9.9</name>
</gene>
<keyword id="KW-0342">GTP-binding</keyword>
<keyword id="KW-0547">Nucleotide-binding</keyword>
<keyword id="KW-0539">Nucleus</keyword>
<keyword id="KW-1185">Reference proteome</keyword>
<keyword id="KW-0690">Ribosome biogenesis</keyword>